<comment type="function">
    <text evidence="1">Specifically catalyzes the dephosphorylation of 2-phosphoglycolate. Is involved in the dissimilation of the intracellular 2-phosphoglycolate formed during the DNA repair of 3'-phosphoglycolate ends, a major class of DNA lesions induced by oxidative stress.</text>
</comment>
<comment type="catalytic activity">
    <reaction evidence="1">
        <text>2-phosphoglycolate + H2O = glycolate + phosphate</text>
        <dbReference type="Rhea" id="RHEA:14369"/>
        <dbReference type="ChEBI" id="CHEBI:15377"/>
        <dbReference type="ChEBI" id="CHEBI:29805"/>
        <dbReference type="ChEBI" id="CHEBI:43474"/>
        <dbReference type="ChEBI" id="CHEBI:58033"/>
        <dbReference type="EC" id="3.1.3.18"/>
    </reaction>
</comment>
<comment type="cofactor">
    <cofactor evidence="1">
        <name>Mg(2+)</name>
        <dbReference type="ChEBI" id="CHEBI:18420"/>
    </cofactor>
</comment>
<comment type="pathway">
    <text evidence="1">Organic acid metabolism; glycolate biosynthesis; glycolate from 2-phosphoglycolate: step 1/1.</text>
</comment>
<comment type="similarity">
    <text evidence="1">Belongs to the HAD-like hydrolase superfamily. CbbY/CbbZ/Gph/YieH family.</text>
</comment>
<evidence type="ECO:0000255" key="1">
    <source>
        <dbReference type="HAMAP-Rule" id="MF_00495"/>
    </source>
</evidence>
<organism>
    <name type="scientific">Pasteurella multocida (strain Pm70)</name>
    <dbReference type="NCBI Taxonomy" id="272843"/>
    <lineage>
        <taxon>Bacteria</taxon>
        <taxon>Pseudomonadati</taxon>
        <taxon>Pseudomonadota</taxon>
        <taxon>Gammaproteobacteria</taxon>
        <taxon>Pasteurellales</taxon>
        <taxon>Pasteurellaceae</taxon>
        <taxon>Pasteurella</taxon>
    </lineage>
</organism>
<name>GPH_PASMU</name>
<proteinExistence type="inferred from homology"/>
<dbReference type="EC" id="3.1.3.18" evidence="1"/>
<dbReference type="EMBL" id="AE004439">
    <property type="protein sequence ID" value="AAK03704.1"/>
    <property type="molecule type" value="Genomic_DNA"/>
</dbReference>
<dbReference type="RefSeq" id="WP_005724482.1">
    <property type="nucleotide sequence ID" value="NC_002663.1"/>
</dbReference>
<dbReference type="STRING" id="272843.PM1620"/>
<dbReference type="EnsemblBacteria" id="AAK03704">
    <property type="protein sequence ID" value="AAK03704"/>
    <property type="gene ID" value="PM1620"/>
</dbReference>
<dbReference type="KEGG" id="pmu:PM1620"/>
<dbReference type="HOGENOM" id="CLU_045011_19_1_6"/>
<dbReference type="OrthoDB" id="9776368at2"/>
<dbReference type="UniPathway" id="UPA00865">
    <property type="reaction ID" value="UER00834"/>
</dbReference>
<dbReference type="Proteomes" id="UP000000809">
    <property type="component" value="Chromosome"/>
</dbReference>
<dbReference type="GO" id="GO:0005829">
    <property type="term" value="C:cytosol"/>
    <property type="evidence" value="ECO:0007669"/>
    <property type="project" value="TreeGrafter"/>
</dbReference>
<dbReference type="GO" id="GO:0046872">
    <property type="term" value="F:metal ion binding"/>
    <property type="evidence" value="ECO:0007669"/>
    <property type="project" value="UniProtKB-KW"/>
</dbReference>
<dbReference type="GO" id="GO:0008967">
    <property type="term" value="F:phosphoglycolate phosphatase activity"/>
    <property type="evidence" value="ECO:0007669"/>
    <property type="project" value="UniProtKB-UniRule"/>
</dbReference>
<dbReference type="GO" id="GO:0005975">
    <property type="term" value="P:carbohydrate metabolic process"/>
    <property type="evidence" value="ECO:0007669"/>
    <property type="project" value="InterPro"/>
</dbReference>
<dbReference type="GO" id="GO:0006281">
    <property type="term" value="P:DNA repair"/>
    <property type="evidence" value="ECO:0007669"/>
    <property type="project" value="TreeGrafter"/>
</dbReference>
<dbReference type="GO" id="GO:0046295">
    <property type="term" value="P:glycolate biosynthetic process"/>
    <property type="evidence" value="ECO:0007669"/>
    <property type="project" value="UniProtKB-UniRule"/>
</dbReference>
<dbReference type="CDD" id="cd16417">
    <property type="entry name" value="HAD_PGPase"/>
    <property type="match status" value="1"/>
</dbReference>
<dbReference type="FunFam" id="3.40.50.1000:FF:000022">
    <property type="entry name" value="Phosphoglycolate phosphatase"/>
    <property type="match status" value="1"/>
</dbReference>
<dbReference type="Gene3D" id="3.40.50.1000">
    <property type="entry name" value="HAD superfamily/HAD-like"/>
    <property type="match status" value="1"/>
</dbReference>
<dbReference type="Gene3D" id="1.10.150.240">
    <property type="entry name" value="Putative phosphatase, domain 2"/>
    <property type="match status" value="1"/>
</dbReference>
<dbReference type="HAMAP" id="MF_00495">
    <property type="entry name" value="GPH_hydrolase_bact"/>
    <property type="match status" value="1"/>
</dbReference>
<dbReference type="InterPro" id="IPR050155">
    <property type="entry name" value="HAD-like_hydrolase_sf"/>
</dbReference>
<dbReference type="InterPro" id="IPR036412">
    <property type="entry name" value="HAD-like_sf"/>
</dbReference>
<dbReference type="InterPro" id="IPR006439">
    <property type="entry name" value="HAD-SF_hydro_IA"/>
</dbReference>
<dbReference type="InterPro" id="IPR041492">
    <property type="entry name" value="HAD_2"/>
</dbReference>
<dbReference type="InterPro" id="IPR023214">
    <property type="entry name" value="HAD_sf"/>
</dbReference>
<dbReference type="InterPro" id="IPR023198">
    <property type="entry name" value="PGP-like_dom2"/>
</dbReference>
<dbReference type="InterPro" id="IPR037512">
    <property type="entry name" value="PGPase_prok"/>
</dbReference>
<dbReference type="NCBIfam" id="TIGR01549">
    <property type="entry name" value="HAD-SF-IA-v1"/>
    <property type="match status" value="1"/>
</dbReference>
<dbReference type="NCBIfam" id="TIGR01509">
    <property type="entry name" value="HAD-SF-IA-v3"/>
    <property type="match status" value="1"/>
</dbReference>
<dbReference type="NCBIfam" id="TIGR01449">
    <property type="entry name" value="PGP_bact"/>
    <property type="match status" value="1"/>
</dbReference>
<dbReference type="NCBIfam" id="NF009695">
    <property type="entry name" value="PRK13222.1-2"/>
    <property type="match status" value="1"/>
</dbReference>
<dbReference type="PANTHER" id="PTHR43434">
    <property type="entry name" value="PHOSPHOGLYCOLATE PHOSPHATASE"/>
    <property type="match status" value="1"/>
</dbReference>
<dbReference type="PANTHER" id="PTHR43434:SF1">
    <property type="entry name" value="PHOSPHOGLYCOLATE PHOSPHATASE"/>
    <property type="match status" value="1"/>
</dbReference>
<dbReference type="Pfam" id="PF13419">
    <property type="entry name" value="HAD_2"/>
    <property type="match status" value="1"/>
</dbReference>
<dbReference type="PRINTS" id="PR00413">
    <property type="entry name" value="HADHALOGNASE"/>
</dbReference>
<dbReference type="SFLD" id="SFLDG01135">
    <property type="entry name" value="C1.5.6:_HAD__Beta-PGM__Phospha"/>
    <property type="match status" value="1"/>
</dbReference>
<dbReference type="SFLD" id="SFLDG01129">
    <property type="entry name" value="C1.5:_HAD__Beta-PGM__Phosphata"/>
    <property type="match status" value="1"/>
</dbReference>
<dbReference type="SUPFAM" id="SSF56784">
    <property type="entry name" value="HAD-like"/>
    <property type="match status" value="1"/>
</dbReference>
<keyword id="KW-0119">Carbohydrate metabolism</keyword>
<keyword id="KW-0378">Hydrolase</keyword>
<keyword id="KW-0460">Magnesium</keyword>
<keyword id="KW-0479">Metal-binding</keyword>
<keyword id="KW-1185">Reference proteome</keyword>
<sequence length="224" mass="24622">MTQFKLIGFDLDGTLVNSLPDLALSVNSAFAEFDLPQAPEDLVLTWIGNGADILIARALAWAKAQTGKTLNDEQIKALKRRFGFYYGENLCNLSVLYPNVKSTLETLKQKGYLLAVVTNKPTKHVQPVLQAFGIDHLFSELLGGQSLPAIKPHPAPLYYLCGKFGLYPKQVLFVGDSKNDILAAHTAGCAVVGLTYGYNYNIPIAESKPDWVFDDFAQILTILE</sequence>
<accession>Q9CKJ5</accession>
<feature type="chain" id="PRO_0000108032" description="Phosphoglycolate phosphatase">
    <location>
        <begin position="1"/>
        <end position="224"/>
    </location>
</feature>
<feature type="active site" description="Nucleophile" evidence="1">
    <location>
        <position position="10"/>
    </location>
</feature>
<feature type="binding site" evidence="1">
    <location>
        <position position="10"/>
    </location>
    <ligand>
        <name>Mg(2+)</name>
        <dbReference type="ChEBI" id="CHEBI:18420"/>
    </ligand>
</feature>
<feature type="binding site" evidence="1">
    <location>
        <position position="12"/>
    </location>
    <ligand>
        <name>Mg(2+)</name>
        <dbReference type="ChEBI" id="CHEBI:18420"/>
    </ligand>
</feature>
<feature type="binding site" evidence="1">
    <location>
        <position position="176"/>
    </location>
    <ligand>
        <name>Mg(2+)</name>
        <dbReference type="ChEBI" id="CHEBI:18420"/>
    </ligand>
</feature>
<protein>
    <recommendedName>
        <fullName evidence="1">Phosphoglycolate phosphatase</fullName>
        <shortName evidence="1">PGP</shortName>
        <shortName evidence="1">PGPase</shortName>
        <ecNumber evidence="1">3.1.3.18</ecNumber>
    </recommendedName>
</protein>
<gene>
    <name evidence="1" type="primary">gph</name>
    <name type="ordered locus">PM1620</name>
</gene>
<reference key="1">
    <citation type="journal article" date="2001" name="Proc. Natl. Acad. Sci. U.S.A.">
        <title>Complete genomic sequence of Pasteurella multocida Pm70.</title>
        <authorList>
            <person name="May B.J."/>
            <person name="Zhang Q."/>
            <person name="Li L.L."/>
            <person name="Paustian M.L."/>
            <person name="Whittam T.S."/>
            <person name="Kapur V."/>
        </authorList>
    </citation>
    <scope>NUCLEOTIDE SEQUENCE [LARGE SCALE GENOMIC DNA]</scope>
    <source>
        <strain>Pm70</strain>
    </source>
</reference>